<feature type="chain" id="PRO_1000059578" description="Chaperone protein DnaK">
    <location>
        <begin position="1"/>
        <end position="620"/>
    </location>
</feature>
<feature type="region of interest" description="Disordered" evidence="2">
    <location>
        <begin position="591"/>
        <end position="620"/>
    </location>
</feature>
<feature type="modified residue" description="Phosphothreonine; by autocatalysis" evidence="1">
    <location>
        <position position="197"/>
    </location>
</feature>
<protein>
    <recommendedName>
        <fullName evidence="1">Chaperone protein DnaK</fullName>
    </recommendedName>
    <alternativeName>
        <fullName evidence="1">HSP70</fullName>
    </alternativeName>
    <alternativeName>
        <fullName evidence="1">Heat shock 70 kDa protein</fullName>
    </alternativeName>
    <alternativeName>
        <fullName evidence="1">Heat shock protein 70</fullName>
    </alternativeName>
</protein>
<comment type="function">
    <text evidence="1">Acts as a chaperone.</text>
</comment>
<comment type="induction">
    <text evidence="1">By stress conditions e.g. heat shock.</text>
</comment>
<comment type="similarity">
    <text evidence="1">Belongs to the heat shock protein 70 family.</text>
</comment>
<dbReference type="EMBL" id="CP000241">
    <property type="protein sequence ID" value="ABF84176.1"/>
    <property type="molecule type" value="Genomic_DNA"/>
</dbReference>
<dbReference type="RefSeq" id="WP_000521009.1">
    <property type="nucleotide sequence ID" value="NC_008086.1"/>
</dbReference>
<dbReference type="SMR" id="Q1CV46"/>
<dbReference type="KEGG" id="hpa:HPAG1_0109"/>
<dbReference type="HOGENOM" id="CLU_005965_2_1_7"/>
<dbReference type="GO" id="GO:0005524">
    <property type="term" value="F:ATP binding"/>
    <property type="evidence" value="ECO:0007669"/>
    <property type="project" value="UniProtKB-UniRule"/>
</dbReference>
<dbReference type="GO" id="GO:0140662">
    <property type="term" value="F:ATP-dependent protein folding chaperone"/>
    <property type="evidence" value="ECO:0007669"/>
    <property type="project" value="InterPro"/>
</dbReference>
<dbReference type="GO" id="GO:0051082">
    <property type="term" value="F:unfolded protein binding"/>
    <property type="evidence" value="ECO:0007669"/>
    <property type="project" value="InterPro"/>
</dbReference>
<dbReference type="CDD" id="cd10234">
    <property type="entry name" value="ASKHA_NBD_HSP70_DnaK-like"/>
    <property type="match status" value="1"/>
</dbReference>
<dbReference type="FunFam" id="2.60.34.10:FF:000014">
    <property type="entry name" value="Chaperone protein DnaK HSP70"/>
    <property type="match status" value="1"/>
</dbReference>
<dbReference type="FunFam" id="1.20.1270.10:FF:000001">
    <property type="entry name" value="Molecular chaperone DnaK"/>
    <property type="match status" value="1"/>
</dbReference>
<dbReference type="FunFam" id="3.30.420.40:FF:000004">
    <property type="entry name" value="Molecular chaperone DnaK"/>
    <property type="match status" value="1"/>
</dbReference>
<dbReference type="FunFam" id="3.90.640.10:FF:000003">
    <property type="entry name" value="Molecular chaperone DnaK"/>
    <property type="match status" value="1"/>
</dbReference>
<dbReference type="Gene3D" id="1.20.1270.10">
    <property type="match status" value="1"/>
</dbReference>
<dbReference type="Gene3D" id="3.30.420.40">
    <property type="match status" value="2"/>
</dbReference>
<dbReference type="Gene3D" id="3.90.640.10">
    <property type="entry name" value="Actin, Chain A, domain 4"/>
    <property type="match status" value="1"/>
</dbReference>
<dbReference type="Gene3D" id="2.60.34.10">
    <property type="entry name" value="Substrate Binding Domain Of DNAk, Chain A, domain 1"/>
    <property type="match status" value="1"/>
</dbReference>
<dbReference type="HAMAP" id="MF_00332">
    <property type="entry name" value="DnaK"/>
    <property type="match status" value="1"/>
</dbReference>
<dbReference type="InterPro" id="IPR043129">
    <property type="entry name" value="ATPase_NBD"/>
</dbReference>
<dbReference type="InterPro" id="IPR012725">
    <property type="entry name" value="Chaperone_DnaK"/>
</dbReference>
<dbReference type="InterPro" id="IPR018181">
    <property type="entry name" value="Heat_shock_70_CS"/>
</dbReference>
<dbReference type="InterPro" id="IPR029048">
    <property type="entry name" value="HSP70_C_sf"/>
</dbReference>
<dbReference type="InterPro" id="IPR029047">
    <property type="entry name" value="HSP70_peptide-bd_sf"/>
</dbReference>
<dbReference type="InterPro" id="IPR013126">
    <property type="entry name" value="Hsp_70_fam"/>
</dbReference>
<dbReference type="NCBIfam" id="NF001413">
    <property type="entry name" value="PRK00290.1"/>
    <property type="match status" value="1"/>
</dbReference>
<dbReference type="NCBIfam" id="NF003520">
    <property type="entry name" value="PRK05183.1"/>
    <property type="match status" value="1"/>
</dbReference>
<dbReference type="NCBIfam" id="TIGR02350">
    <property type="entry name" value="prok_dnaK"/>
    <property type="match status" value="1"/>
</dbReference>
<dbReference type="PANTHER" id="PTHR19375">
    <property type="entry name" value="HEAT SHOCK PROTEIN 70KDA"/>
    <property type="match status" value="1"/>
</dbReference>
<dbReference type="Pfam" id="PF00012">
    <property type="entry name" value="HSP70"/>
    <property type="match status" value="1"/>
</dbReference>
<dbReference type="PRINTS" id="PR00301">
    <property type="entry name" value="HEATSHOCK70"/>
</dbReference>
<dbReference type="SUPFAM" id="SSF53067">
    <property type="entry name" value="Actin-like ATPase domain"/>
    <property type="match status" value="2"/>
</dbReference>
<dbReference type="SUPFAM" id="SSF100934">
    <property type="entry name" value="Heat shock protein 70kD (HSP70), C-terminal subdomain"/>
    <property type="match status" value="1"/>
</dbReference>
<dbReference type="SUPFAM" id="SSF100920">
    <property type="entry name" value="Heat shock protein 70kD (HSP70), peptide-binding domain"/>
    <property type="match status" value="1"/>
</dbReference>
<dbReference type="PROSITE" id="PS00297">
    <property type="entry name" value="HSP70_1"/>
    <property type="match status" value="1"/>
</dbReference>
<dbReference type="PROSITE" id="PS00329">
    <property type="entry name" value="HSP70_2"/>
    <property type="match status" value="1"/>
</dbReference>
<dbReference type="PROSITE" id="PS01036">
    <property type="entry name" value="HSP70_3"/>
    <property type="match status" value="1"/>
</dbReference>
<name>DNAK_HELPH</name>
<organism>
    <name type="scientific">Helicobacter pylori (strain HPAG1)</name>
    <dbReference type="NCBI Taxonomy" id="357544"/>
    <lineage>
        <taxon>Bacteria</taxon>
        <taxon>Pseudomonadati</taxon>
        <taxon>Campylobacterota</taxon>
        <taxon>Epsilonproteobacteria</taxon>
        <taxon>Campylobacterales</taxon>
        <taxon>Helicobacteraceae</taxon>
        <taxon>Helicobacter</taxon>
    </lineage>
</organism>
<gene>
    <name evidence="1" type="primary">dnaK</name>
    <name type="ordered locus">HPAG1_0109</name>
</gene>
<accession>Q1CV46</accession>
<evidence type="ECO:0000255" key="1">
    <source>
        <dbReference type="HAMAP-Rule" id="MF_00332"/>
    </source>
</evidence>
<evidence type="ECO:0000256" key="2">
    <source>
        <dbReference type="SAM" id="MobiDB-lite"/>
    </source>
</evidence>
<keyword id="KW-0067">ATP-binding</keyword>
<keyword id="KW-0143">Chaperone</keyword>
<keyword id="KW-0547">Nucleotide-binding</keyword>
<keyword id="KW-0597">Phosphoprotein</keyword>
<keyword id="KW-0346">Stress response</keyword>
<proteinExistence type="inferred from homology"/>
<reference key="1">
    <citation type="journal article" date="2006" name="Proc. Natl. Acad. Sci. U.S.A.">
        <title>The complete genome sequence of a chronic atrophic gastritis Helicobacter pylori strain: evolution during disease progression.</title>
        <authorList>
            <person name="Oh J.D."/>
            <person name="Kling-Baeckhed H."/>
            <person name="Giannakis M."/>
            <person name="Xu J."/>
            <person name="Fulton R.S."/>
            <person name="Fulton L.A."/>
            <person name="Cordum H.S."/>
            <person name="Wang C."/>
            <person name="Elliott G."/>
            <person name="Edwards J."/>
            <person name="Mardis E.R."/>
            <person name="Engstrand L.G."/>
            <person name="Gordon J.I."/>
        </authorList>
    </citation>
    <scope>NUCLEOTIDE SEQUENCE [LARGE SCALE GENOMIC DNA]</scope>
    <source>
        <strain>HPAG1</strain>
    </source>
</reference>
<sequence length="620" mass="67067">MGKVIGIDLGTTNSAMAVYEGNEAKIIANKEGKNTTPSIVAFTDKGEILVGESAKRQAVTNPEKTIYSIKRIMGLMFNEDKAKEAEKRLPYKIVDRNGACAIEISGKVYTPQEISAKILMKLKEDAESYLGESVTEAVITVPAYFNDSQRKATKEAGTIAGLNVLRIINEPTSAALAYGLDKKESEKIMVYDLGGGTFDVTVLETGDNVVEVLATGGDAFLGGDDFDNRVIDFLASEFKSETGIEIKNDVMALQRLKEAAENAKKELSSAMETEINLPFITADATGPKHLVKKLTRAKFESLTEDLMEETISKIESVIKDAGLTKNEISEVVMVGGSTRIPKVQERVKAFINKELNKSVNPDEVVAVGASIQGGVLKGDVKDVLLLDVTPLSLGIETLGGVMTKVIDRGTTIPAKKSQVFSTAEDNQPAVSIMVLQGERELARDNKSLGKFDLQGIAPAPRGVPQIEVTFDIDANGILTVSAQDKNTGKSQEIKISGSSGLSDSEIEKMVKDAELHKEEDARKKEVIEARNHADSLAHQTQKSLDEHKTNLNENDANEIQNAINALKDCIKNDNATKAELEDKTKALAQAAQKLGEAMANKNNAEQPKKKDDDVIDAEVE</sequence>